<gene>
    <name evidence="6" type="primary">Lancl1</name>
    <name evidence="4" type="synonym">Gpr69a</name>
</gene>
<dbReference type="EC" id="2.5.1.18" evidence="2"/>
<dbReference type="EMBL" id="AJ131111">
    <property type="protein sequence ID" value="CAB63943.1"/>
    <property type="molecule type" value="mRNA"/>
</dbReference>
<dbReference type="EMBL" id="AJ295233">
    <property type="protein sequence ID" value="CAC16089.1"/>
    <property type="molecule type" value="mRNA"/>
</dbReference>
<dbReference type="EMBL" id="BC085811">
    <property type="protein sequence ID" value="AAH85811.1"/>
    <property type="molecule type" value="mRNA"/>
</dbReference>
<dbReference type="RefSeq" id="NP_446175.1">
    <property type="nucleotide sequence ID" value="NM_053723.1"/>
</dbReference>
<dbReference type="RefSeq" id="XP_038938832.1">
    <property type="nucleotide sequence ID" value="XM_039082904.2"/>
</dbReference>
<dbReference type="RefSeq" id="XP_038938833.1">
    <property type="nucleotide sequence ID" value="XM_039082905.2"/>
</dbReference>
<dbReference type="RefSeq" id="XP_063122604.1">
    <property type="nucleotide sequence ID" value="XM_063266534.1"/>
</dbReference>
<dbReference type="SMR" id="Q9QX69"/>
<dbReference type="BioGRID" id="250361">
    <property type="interactions" value="2"/>
</dbReference>
<dbReference type="FunCoup" id="Q9QX69">
    <property type="interactions" value="2139"/>
</dbReference>
<dbReference type="IntAct" id="Q9QX69">
    <property type="interactions" value="4"/>
</dbReference>
<dbReference type="MINT" id="Q9QX69"/>
<dbReference type="STRING" id="10116.ENSRNOP00000018293"/>
<dbReference type="iPTMnet" id="Q9QX69"/>
<dbReference type="PhosphoSitePlus" id="Q9QX69"/>
<dbReference type="jPOST" id="Q9QX69"/>
<dbReference type="PaxDb" id="10116-ENSRNOP00000018293"/>
<dbReference type="GeneID" id="114515"/>
<dbReference type="KEGG" id="rno:114515"/>
<dbReference type="UCSC" id="RGD:69416">
    <property type="organism name" value="rat"/>
</dbReference>
<dbReference type="AGR" id="RGD:69416"/>
<dbReference type="CTD" id="10314"/>
<dbReference type="RGD" id="69416">
    <property type="gene designation" value="Lancl1"/>
</dbReference>
<dbReference type="VEuPathDB" id="HostDB:ENSRNOG00000013557"/>
<dbReference type="eggNOG" id="KOG2787">
    <property type="taxonomic scope" value="Eukaryota"/>
</dbReference>
<dbReference type="HOGENOM" id="CLU_036244_0_0_1"/>
<dbReference type="InParanoid" id="Q9QX69"/>
<dbReference type="PhylomeDB" id="Q9QX69"/>
<dbReference type="TreeFam" id="TF300068"/>
<dbReference type="PRO" id="PR:Q9QX69"/>
<dbReference type="Proteomes" id="UP000002494">
    <property type="component" value="Chromosome 9"/>
</dbReference>
<dbReference type="Bgee" id="ENSRNOG00000013557">
    <property type="expression patterns" value="Expressed in testis and 19 other cell types or tissues"/>
</dbReference>
<dbReference type="GO" id="GO:0005737">
    <property type="term" value="C:cytoplasm"/>
    <property type="evidence" value="ECO:0007669"/>
    <property type="project" value="UniProtKB-SubCell"/>
</dbReference>
<dbReference type="GO" id="GO:0005886">
    <property type="term" value="C:plasma membrane"/>
    <property type="evidence" value="ECO:0000318"/>
    <property type="project" value="GO_Central"/>
</dbReference>
<dbReference type="GO" id="GO:0043295">
    <property type="term" value="F:glutathione binding"/>
    <property type="evidence" value="ECO:0000250"/>
    <property type="project" value="UniProtKB"/>
</dbReference>
<dbReference type="GO" id="GO:0004364">
    <property type="term" value="F:glutathione transferase activity"/>
    <property type="evidence" value="ECO:0000250"/>
    <property type="project" value="UniProtKB"/>
</dbReference>
<dbReference type="GO" id="GO:0050750">
    <property type="term" value="F:low-density lipoprotein particle receptor binding"/>
    <property type="evidence" value="ECO:0000266"/>
    <property type="project" value="RGD"/>
</dbReference>
<dbReference type="GO" id="GO:0017124">
    <property type="term" value="F:SH3 domain binding"/>
    <property type="evidence" value="ECO:0000266"/>
    <property type="project" value="RGD"/>
</dbReference>
<dbReference type="GO" id="GO:0008270">
    <property type="term" value="F:zinc ion binding"/>
    <property type="evidence" value="ECO:0000250"/>
    <property type="project" value="UniProtKB"/>
</dbReference>
<dbReference type="GO" id="GO:0005975">
    <property type="term" value="P:carbohydrate metabolic process"/>
    <property type="evidence" value="ECO:0007669"/>
    <property type="project" value="InterPro"/>
</dbReference>
<dbReference type="GO" id="GO:1990748">
    <property type="term" value="P:cellular detoxification"/>
    <property type="evidence" value="ECO:0000250"/>
    <property type="project" value="UniProtKB"/>
</dbReference>
<dbReference type="GO" id="GO:0031179">
    <property type="term" value="P:peptide modification"/>
    <property type="evidence" value="ECO:0007669"/>
    <property type="project" value="InterPro"/>
</dbReference>
<dbReference type="CDD" id="cd04794">
    <property type="entry name" value="euk_LANCL"/>
    <property type="match status" value="1"/>
</dbReference>
<dbReference type="FunFam" id="1.50.10.10:FF:000019">
    <property type="entry name" value="LanC-like protein 1"/>
    <property type="match status" value="1"/>
</dbReference>
<dbReference type="Gene3D" id="1.50.10.10">
    <property type="match status" value="1"/>
</dbReference>
<dbReference type="InterPro" id="IPR012341">
    <property type="entry name" value="6hp_glycosidase-like_sf"/>
</dbReference>
<dbReference type="InterPro" id="IPR007822">
    <property type="entry name" value="LANC-like"/>
</dbReference>
<dbReference type="InterPro" id="IPR020464">
    <property type="entry name" value="LanC-like_prot_euk"/>
</dbReference>
<dbReference type="PANTHER" id="PTHR12736:SF5">
    <property type="entry name" value="GLUTATHIONE S-TRANSFERASE LANCL1"/>
    <property type="match status" value="1"/>
</dbReference>
<dbReference type="PANTHER" id="PTHR12736">
    <property type="entry name" value="LANC-LIKE PROTEIN"/>
    <property type="match status" value="1"/>
</dbReference>
<dbReference type="Pfam" id="PF05147">
    <property type="entry name" value="LANC_like"/>
    <property type="match status" value="1"/>
</dbReference>
<dbReference type="PRINTS" id="PR01951">
    <property type="entry name" value="LANCEUKARYTE"/>
</dbReference>
<dbReference type="PRINTS" id="PR01950">
    <property type="entry name" value="LANCSUPER"/>
</dbReference>
<dbReference type="SMART" id="SM01260">
    <property type="entry name" value="LANC_like"/>
    <property type="match status" value="1"/>
</dbReference>
<dbReference type="SUPFAM" id="SSF158745">
    <property type="entry name" value="LanC-like"/>
    <property type="match status" value="1"/>
</dbReference>
<accession>Q9QX69</accession>
<accession>Q9ER29</accession>
<proteinExistence type="evidence at protein level"/>
<protein>
    <recommendedName>
        <fullName evidence="2">Glutathione S-transferase LANCL1</fullName>
        <ecNumber evidence="2">2.5.1.18</ecNumber>
    </recommendedName>
    <alternativeName>
        <fullName>40 kDa erythrocyte membrane protein</fullName>
        <shortName evidence="4">p40</shortName>
    </alternativeName>
    <alternativeName>
        <fullName evidence="1">LanC-like protein 1</fullName>
    </alternativeName>
</protein>
<comment type="function">
    <text evidence="1 2">Functions as a glutathione transferase. Catalyzes conjugation of the glutathione (GSH) to artificial substrates 1-chloro-2,4-dinitrobenzene (CDNB) and p-nitrophenyl acetate. Mitigates neuronal oxidative stress during normal postnatal development and in response to oxidative stresses probably through GSH antioxidant defense mechanism (By similarity). May play a role in EPS8 signaling. Binds glutathione (By similarity).</text>
</comment>
<comment type="catalytic activity">
    <reaction evidence="2">
        <text>RX + glutathione = an S-substituted glutathione + a halide anion + H(+)</text>
        <dbReference type="Rhea" id="RHEA:16437"/>
        <dbReference type="ChEBI" id="CHEBI:15378"/>
        <dbReference type="ChEBI" id="CHEBI:16042"/>
        <dbReference type="ChEBI" id="CHEBI:17792"/>
        <dbReference type="ChEBI" id="CHEBI:57925"/>
        <dbReference type="ChEBI" id="CHEBI:90779"/>
        <dbReference type="EC" id="2.5.1.18"/>
    </reaction>
</comment>
<comment type="catalytic activity">
    <reaction evidence="2">
        <text>1-chloro-2,4-dinitrobenzene + glutathione = 2,4-dinitrophenyl-S-glutathione + chloride + H(+)</text>
        <dbReference type="Rhea" id="RHEA:51220"/>
        <dbReference type="ChEBI" id="CHEBI:15378"/>
        <dbReference type="ChEBI" id="CHEBI:17996"/>
        <dbReference type="ChEBI" id="CHEBI:34718"/>
        <dbReference type="ChEBI" id="CHEBI:57925"/>
        <dbReference type="ChEBI" id="CHEBI:133977"/>
        <dbReference type="EC" id="2.5.1.18"/>
    </reaction>
</comment>
<comment type="subunit">
    <text evidence="1">Interacts with the C-terminal of STOM (By similarity). Interacts with the EPS8 SH3 domain. Interaction with EPS8 is inhibited by glutathione binding (By similarity).</text>
</comment>
<comment type="subcellular location">
    <subcellularLocation>
        <location evidence="1">Cytoplasm</location>
    </subcellularLocation>
    <subcellularLocation>
        <location evidence="1">Cell membrane</location>
        <topology evidence="1">Peripheral membrane protein</topology>
    </subcellularLocation>
</comment>
<comment type="tissue specificity">
    <text evidence="3">Strongly expressed in the brain, testis and skeletal muscle. Expressed in the neurons of the cerebellum, the germinal cells of the seminiferous tubules in testis, in liver hepoatocytes and in cardiac myocytes.</text>
</comment>
<comment type="similarity">
    <text evidence="5">Belongs to the LanC-like protein family.</text>
</comment>
<feature type="initiator methionine" description="Removed" evidence="1">
    <location>
        <position position="1"/>
    </location>
</feature>
<feature type="chain" id="PRO_0000191270" description="Glutathione S-transferase LANCL1">
    <location>
        <begin position="2"/>
        <end position="399"/>
    </location>
</feature>
<feature type="binding site" evidence="1">
    <location>
        <position position="276"/>
    </location>
    <ligand>
        <name>Zn(2+)</name>
        <dbReference type="ChEBI" id="CHEBI:29105"/>
    </ligand>
</feature>
<feature type="binding site" evidence="1">
    <location>
        <position position="317"/>
    </location>
    <ligand>
        <name>glutathione</name>
        <dbReference type="ChEBI" id="CHEBI:57925"/>
    </ligand>
</feature>
<feature type="binding site" evidence="1">
    <location>
        <position position="322"/>
    </location>
    <ligand>
        <name>Zn(2+)</name>
        <dbReference type="ChEBI" id="CHEBI:29105"/>
    </ligand>
</feature>
<feature type="binding site" evidence="1">
    <location>
        <position position="323"/>
    </location>
    <ligand>
        <name>Zn(2+)</name>
        <dbReference type="ChEBI" id="CHEBI:29105"/>
    </ligand>
</feature>
<feature type="binding site" evidence="1">
    <location>
        <begin position="364"/>
        <end position="367"/>
    </location>
    <ligand>
        <name>glutathione</name>
        <dbReference type="ChEBI" id="CHEBI:57925"/>
    </ligand>
</feature>
<feature type="modified residue" description="N-acetylalanine" evidence="1">
    <location>
        <position position="2"/>
    </location>
</feature>
<feature type="modified residue" description="N6-acetyllysine" evidence="1">
    <location>
        <position position="142"/>
    </location>
</feature>
<evidence type="ECO:0000250" key="1">
    <source>
        <dbReference type="UniProtKB" id="O43813"/>
    </source>
</evidence>
<evidence type="ECO:0000250" key="2">
    <source>
        <dbReference type="UniProtKB" id="O89112"/>
    </source>
</evidence>
<evidence type="ECO:0000269" key="3">
    <source>
    </source>
</evidence>
<evidence type="ECO:0000303" key="4">
    <source>
    </source>
</evidence>
<evidence type="ECO:0000305" key="5"/>
<evidence type="ECO:0000312" key="6">
    <source>
        <dbReference type="RGD" id="69416"/>
    </source>
</evidence>
<reference key="1">
    <citation type="journal article" date="2000" name="Biochem. Biophys. Res. Commun.">
        <title>Characterization of p40/GPR69A as a peripheral membrane protein related to the lantibiotic synthetase component C.</title>
        <authorList>
            <person name="Bauer H."/>
            <person name="Mayer H."/>
            <person name="Marchler-Bauer A."/>
            <person name="Salzer U."/>
            <person name="Prohaska R."/>
        </authorList>
    </citation>
    <scope>NUCLEOTIDE SEQUENCE [MRNA]</scope>
    <source>
        <strain>Sprague-Dawley</strain>
        <tissue>Brain</tissue>
    </source>
</reference>
<reference key="2">
    <citation type="journal article" date="2001" name="Gene">
        <title>Characterization of rat LANCL1, a novel member of the lanthionine synthetase C-like protein family, highly expressed in testis and brain.</title>
        <authorList>
            <person name="Mayer H."/>
            <person name="Bauer H."/>
            <person name="Breuss J."/>
            <person name="Ziegler S."/>
            <person name="Prohaska R."/>
        </authorList>
    </citation>
    <scope>NUCLEOTIDE SEQUENCE [MRNA]</scope>
    <scope>TISSUE SPECIFICITY</scope>
    <source>
        <strain>Sprague-Dawley</strain>
        <tissue>Brain</tissue>
    </source>
</reference>
<reference key="3">
    <citation type="journal article" date="2004" name="Genome Res.">
        <title>The status, quality, and expansion of the NIH full-length cDNA project: the Mammalian Gene Collection (MGC).</title>
        <authorList>
            <consortium name="The MGC Project Team"/>
        </authorList>
    </citation>
    <scope>NUCLEOTIDE SEQUENCE [LARGE SCALE MRNA]</scope>
    <source>
        <tissue>Testis</tissue>
    </source>
</reference>
<reference key="4">
    <citation type="journal article" date="2012" name="Nat. Commun.">
        <title>Quantitative maps of protein phosphorylation sites across 14 different rat organs and tissues.</title>
        <authorList>
            <person name="Lundby A."/>
            <person name="Secher A."/>
            <person name="Lage K."/>
            <person name="Nordsborg N.B."/>
            <person name="Dmytriyev A."/>
            <person name="Lundby C."/>
            <person name="Olsen J.V."/>
        </authorList>
    </citation>
    <scope>IDENTIFICATION BY MASS SPECTROMETRY [LARGE SCALE ANALYSIS]</scope>
</reference>
<name>LANC1_RAT</name>
<sequence>MAQRAFPNPYADYNKSLAENYFDSTGRLTPEFSHRLTNKIRELLQQMERGLKSADPQDGTGYTGWAGIAVLYLHLHNVFGDPAYLQMAHSYVKHSLNCLSRRSITFLCGDAGPLAVAAVLYHKMNSGKQAEDCITRLIHLNKIDPHVPNEMLYGRIGYIFALLFVNKNFGEEKIPQSHIQQICETILTSGEKLSRKRNFTTKSPLMYEWYQEYYVGAAHGLAGIYYYLMQPSLHVSQGKLHSLVKPSVDFVCQLKFPSGNYPSCLDDTRDLLVHWCHGAPGVIYMLIQAYKVFKEEHYLCDAQQCADVIWQYGLLKKGYGLCHGAAGNAYAFLALYNLTQDAKYLYRACKFAEWCLDYGEHGCRTPDTPFSLFEGMAGTIYFLADLLVPTKAKFPAFEL</sequence>
<organism>
    <name type="scientific">Rattus norvegicus</name>
    <name type="common">Rat</name>
    <dbReference type="NCBI Taxonomy" id="10116"/>
    <lineage>
        <taxon>Eukaryota</taxon>
        <taxon>Metazoa</taxon>
        <taxon>Chordata</taxon>
        <taxon>Craniata</taxon>
        <taxon>Vertebrata</taxon>
        <taxon>Euteleostomi</taxon>
        <taxon>Mammalia</taxon>
        <taxon>Eutheria</taxon>
        <taxon>Euarchontoglires</taxon>
        <taxon>Glires</taxon>
        <taxon>Rodentia</taxon>
        <taxon>Myomorpha</taxon>
        <taxon>Muroidea</taxon>
        <taxon>Muridae</taxon>
        <taxon>Murinae</taxon>
        <taxon>Rattus</taxon>
    </lineage>
</organism>
<keyword id="KW-0007">Acetylation</keyword>
<keyword id="KW-1003">Cell membrane</keyword>
<keyword id="KW-0963">Cytoplasm</keyword>
<keyword id="KW-0472">Membrane</keyword>
<keyword id="KW-0479">Metal-binding</keyword>
<keyword id="KW-1185">Reference proteome</keyword>
<keyword id="KW-0808">Transferase</keyword>
<keyword id="KW-0862">Zinc</keyword>